<comment type="function">
    <text evidence="1">Catalyzes the GTP-dependent ribosomal translocation step during translation elongation. During this step, the ribosome changes from the pre-translocational (PRE) to the post-translocational (POST) state as the newly formed A-site-bound peptidyl-tRNA and P-site-bound deacylated tRNA move to the P and E sites, respectively. Catalyzes the coordinated movement of the two tRNA molecules, the mRNA and conformational changes in the ribosome.</text>
</comment>
<comment type="subcellular location">
    <subcellularLocation>
        <location evidence="1">Cytoplasm</location>
    </subcellularLocation>
</comment>
<comment type="similarity">
    <text evidence="1">Belongs to the TRAFAC class translation factor GTPase superfamily. Classic translation factor GTPase family. EF-G/EF-2 subfamily.</text>
</comment>
<reference key="1">
    <citation type="journal article" date="2009" name="Genome Biol.">
        <title>Genomic and genetic analyses of diversity and plant interactions of Pseudomonas fluorescens.</title>
        <authorList>
            <person name="Silby M.W."/>
            <person name="Cerdeno-Tarraga A.M."/>
            <person name="Vernikos G.S."/>
            <person name="Giddens S.R."/>
            <person name="Jackson R.W."/>
            <person name="Preston G.M."/>
            <person name="Zhang X.-X."/>
            <person name="Moon C.D."/>
            <person name="Gehrig S.M."/>
            <person name="Godfrey S.A.C."/>
            <person name="Knight C.G."/>
            <person name="Malone J.G."/>
            <person name="Robinson Z."/>
            <person name="Spiers A.J."/>
            <person name="Harris S."/>
            <person name="Challis G.L."/>
            <person name="Yaxley A.M."/>
            <person name="Harris D."/>
            <person name="Seeger K."/>
            <person name="Murphy L."/>
            <person name="Rutter S."/>
            <person name="Squares R."/>
            <person name="Quail M.A."/>
            <person name="Saunders E."/>
            <person name="Mavromatis K."/>
            <person name="Brettin T.S."/>
            <person name="Bentley S.D."/>
            <person name="Hothersall J."/>
            <person name="Stephens E."/>
            <person name="Thomas C.M."/>
            <person name="Parkhill J."/>
            <person name="Levy S.B."/>
            <person name="Rainey P.B."/>
            <person name="Thomson N.R."/>
        </authorList>
    </citation>
    <scope>NUCLEOTIDE SEQUENCE [LARGE SCALE GENOMIC DNA]</scope>
    <source>
        <strain>Pf0-1</strain>
    </source>
</reference>
<protein>
    <recommendedName>
        <fullName evidence="1">Elongation factor G</fullName>
        <shortName evidence="1">EF-G</shortName>
    </recommendedName>
</protein>
<dbReference type="EMBL" id="CP000094">
    <property type="protein sequence ID" value="ABA76819.1"/>
    <property type="molecule type" value="Genomic_DNA"/>
</dbReference>
<dbReference type="RefSeq" id="WP_011336173.1">
    <property type="nucleotide sequence ID" value="NC_007492.2"/>
</dbReference>
<dbReference type="SMR" id="Q3K5Y5"/>
<dbReference type="KEGG" id="pfo:Pfl01_5082"/>
<dbReference type="eggNOG" id="COG0480">
    <property type="taxonomic scope" value="Bacteria"/>
</dbReference>
<dbReference type="HOGENOM" id="CLU_002794_4_1_6"/>
<dbReference type="Proteomes" id="UP000002704">
    <property type="component" value="Chromosome"/>
</dbReference>
<dbReference type="GO" id="GO:0005737">
    <property type="term" value="C:cytoplasm"/>
    <property type="evidence" value="ECO:0007669"/>
    <property type="project" value="UniProtKB-SubCell"/>
</dbReference>
<dbReference type="GO" id="GO:0005525">
    <property type="term" value="F:GTP binding"/>
    <property type="evidence" value="ECO:0007669"/>
    <property type="project" value="UniProtKB-UniRule"/>
</dbReference>
<dbReference type="GO" id="GO:0003924">
    <property type="term" value="F:GTPase activity"/>
    <property type="evidence" value="ECO:0007669"/>
    <property type="project" value="InterPro"/>
</dbReference>
<dbReference type="GO" id="GO:0097216">
    <property type="term" value="F:guanosine tetraphosphate binding"/>
    <property type="evidence" value="ECO:0007669"/>
    <property type="project" value="UniProtKB-ARBA"/>
</dbReference>
<dbReference type="GO" id="GO:0003746">
    <property type="term" value="F:translation elongation factor activity"/>
    <property type="evidence" value="ECO:0007669"/>
    <property type="project" value="UniProtKB-UniRule"/>
</dbReference>
<dbReference type="GO" id="GO:0032790">
    <property type="term" value="P:ribosome disassembly"/>
    <property type="evidence" value="ECO:0007669"/>
    <property type="project" value="TreeGrafter"/>
</dbReference>
<dbReference type="CDD" id="cd01886">
    <property type="entry name" value="EF-G"/>
    <property type="match status" value="1"/>
</dbReference>
<dbReference type="CDD" id="cd16262">
    <property type="entry name" value="EFG_III"/>
    <property type="match status" value="1"/>
</dbReference>
<dbReference type="CDD" id="cd01434">
    <property type="entry name" value="EFG_mtEFG1_IV"/>
    <property type="match status" value="1"/>
</dbReference>
<dbReference type="CDD" id="cd03713">
    <property type="entry name" value="EFG_mtEFG_C"/>
    <property type="match status" value="1"/>
</dbReference>
<dbReference type="CDD" id="cd04088">
    <property type="entry name" value="EFG_mtEFG_II"/>
    <property type="match status" value="1"/>
</dbReference>
<dbReference type="FunFam" id="2.40.30.10:FF:000006">
    <property type="entry name" value="Elongation factor G"/>
    <property type="match status" value="1"/>
</dbReference>
<dbReference type="FunFam" id="3.30.230.10:FF:000003">
    <property type="entry name" value="Elongation factor G"/>
    <property type="match status" value="1"/>
</dbReference>
<dbReference type="FunFam" id="3.30.70.240:FF:000001">
    <property type="entry name" value="Elongation factor G"/>
    <property type="match status" value="1"/>
</dbReference>
<dbReference type="FunFam" id="3.30.70.870:FF:000001">
    <property type="entry name" value="Elongation factor G"/>
    <property type="match status" value="1"/>
</dbReference>
<dbReference type="FunFam" id="3.40.50.300:FF:000029">
    <property type="entry name" value="Elongation factor G"/>
    <property type="match status" value="1"/>
</dbReference>
<dbReference type="Gene3D" id="3.30.230.10">
    <property type="match status" value="1"/>
</dbReference>
<dbReference type="Gene3D" id="3.30.70.240">
    <property type="match status" value="1"/>
</dbReference>
<dbReference type="Gene3D" id="3.30.70.870">
    <property type="entry name" value="Elongation Factor G (Translational Gtpase), domain 3"/>
    <property type="match status" value="1"/>
</dbReference>
<dbReference type="Gene3D" id="3.40.50.300">
    <property type="entry name" value="P-loop containing nucleotide triphosphate hydrolases"/>
    <property type="match status" value="1"/>
</dbReference>
<dbReference type="Gene3D" id="2.40.30.10">
    <property type="entry name" value="Translation factors"/>
    <property type="match status" value="1"/>
</dbReference>
<dbReference type="HAMAP" id="MF_00054_B">
    <property type="entry name" value="EF_G_EF_2_B"/>
    <property type="match status" value="1"/>
</dbReference>
<dbReference type="InterPro" id="IPR041095">
    <property type="entry name" value="EFG_II"/>
</dbReference>
<dbReference type="InterPro" id="IPR009022">
    <property type="entry name" value="EFG_III"/>
</dbReference>
<dbReference type="InterPro" id="IPR035647">
    <property type="entry name" value="EFG_III/V"/>
</dbReference>
<dbReference type="InterPro" id="IPR047872">
    <property type="entry name" value="EFG_IV"/>
</dbReference>
<dbReference type="InterPro" id="IPR035649">
    <property type="entry name" value="EFG_V"/>
</dbReference>
<dbReference type="InterPro" id="IPR000640">
    <property type="entry name" value="EFG_V-like"/>
</dbReference>
<dbReference type="InterPro" id="IPR004161">
    <property type="entry name" value="EFTu-like_2"/>
</dbReference>
<dbReference type="InterPro" id="IPR031157">
    <property type="entry name" value="G_TR_CS"/>
</dbReference>
<dbReference type="InterPro" id="IPR027417">
    <property type="entry name" value="P-loop_NTPase"/>
</dbReference>
<dbReference type="InterPro" id="IPR020568">
    <property type="entry name" value="Ribosomal_Su5_D2-typ_SF"/>
</dbReference>
<dbReference type="InterPro" id="IPR014721">
    <property type="entry name" value="Ribsml_uS5_D2-typ_fold_subgr"/>
</dbReference>
<dbReference type="InterPro" id="IPR005225">
    <property type="entry name" value="Small_GTP-bd"/>
</dbReference>
<dbReference type="InterPro" id="IPR000795">
    <property type="entry name" value="T_Tr_GTP-bd_dom"/>
</dbReference>
<dbReference type="InterPro" id="IPR009000">
    <property type="entry name" value="Transl_B-barrel_sf"/>
</dbReference>
<dbReference type="InterPro" id="IPR004540">
    <property type="entry name" value="Transl_elong_EFG/EF2"/>
</dbReference>
<dbReference type="InterPro" id="IPR005517">
    <property type="entry name" value="Transl_elong_EFG/EF2_IV"/>
</dbReference>
<dbReference type="NCBIfam" id="TIGR00484">
    <property type="entry name" value="EF-G"/>
    <property type="match status" value="1"/>
</dbReference>
<dbReference type="NCBIfam" id="NF009381">
    <property type="entry name" value="PRK12740.1-5"/>
    <property type="match status" value="1"/>
</dbReference>
<dbReference type="NCBIfam" id="TIGR00231">
    <property type="entry name" value="small_GTP"/>
    <property type="match status" value="1"/>
</dbReference>
<dbReference type="PANTHER" id="PTHR43261:SF1">
    <property type="entry name" value="RIBOSOME-RELEASING FACTOR 2, MITOCHONDRIAL"/>
    <property type="match status" value="1"/>
</dbReference>
<dbReference type="PANTHER" id="PTHR43261">
    <property type="entry name" value="TRANSLATION ELONGATION FACTOR G-RELATED"/>
    <property type="match status" value="1"/>
</dbReference>
<dbReference type="Pfam" id="PF00679">
    <property type="entry name" value="EFG_C"/>
    <property type="match status" value="1"/>
</dbReference>
<dbReference type="Pfam" id="PF14492">
    <property type="entry name" value="EFG_III"/>
    <property type="match status" value="1"/>
</dbReference>
<dbReference type="Pfam" id="PF03764">
    <property type="entry name" value="EFG_IV"/>
    <property type="match status" value="1"/>
</dbReference>
<dbReference type="Pfam" id="PF00009">
    <property type="entry name" value="GTP_EFTU"/>
    <property type="match status" value="1"/>
</dbReference>
<dbReference type="Pfam" id="PF03144">
    <property type="entry name" value="GTP_EFTU_D2"/>
    <property type="match status" value="1"/>
</dbReference>
<dbReference type="PRINTS" id="PR00315">
    <property type="entry name" value="ELONGATNFCT"/>
</dbReference>
<dbReference type="SMART" id="SM00838">
    <property type="entry name" value="EFG_C"/>
    <property type="match status" value="1"/>
</dbReference>
<dbReference type="SMART" id="SM00889">
    <property type="entry name" value="EFG_IV"/>
    <property type="match status" value="1"/>
</dbReference>
<dbReference type="SUPFAM" id="SSF54980">
    <property type="entry name" value="EF-G C-terminal domain-like"/>
    <property type="match status" value="2"/>
</dbReference>
<dbReference type="SUPFAM" id="SSF52540">
    <property type="entry name" value="P-loop containing nucleoside triphosphate hydrolases"/>
    <property type="match status" value="1"/>
</dbReference>
<dbReference type="SUPFAM" id="SSF54211">
    <property type="entry name" value="Ribosomal protein S5 domain 2-like"/>
    <property type="match status" value="1"/>
</dbReference>
<dbReference type="SUPFAM" id="SSF50447">
    <property type="entry name" value="Translation proteins"/>
    <property type="match status" value="1"/>
</dbReference>
<dbReference type="PROSITE" id="PS00301">
    <property type="entry name" value="G_TR_1"/>
    <property type="match status" value="1"/>
</dbReference>
<dbReference type="PROSITE" id="PS51722">
    <property type="entry name" value="G_TR_2"/>
    <property type="match status" value="1"/>
</dbReference>
<organism>
    <name type="scientific">Pseudomonas fluorescens (strain Pf0-1)</name>
    <dbReference type="NCBI Taxonomy" id="205922"/>
    <lineage>
        <taxon>Bacteria</taxon>
        <taxon>Pseudomonadati</taxon>
        <taxon>Pseudomonadota</taxon>
        <taxon>Gammaproteobacteria</taxon>
        <taxon>Pseudomonadales</taxon>
        <taxon>Pseudomonadaceae</taxon>
        <taxon>Pseudomonas</taxon>
    </lineage>
</organism>
<keyword id="KW-0963">Cytoplasm</keyword>
<keyword id="KW-0251">Elongation factor</keyword>
<keyword id="KW-0342">GTP-binding</keyword>
<keyword id="KW-0547">Nucleotide-binding</keyword>
<keyword id="KW-0648">Protein biosynthesis</keyword>
<name>EFG_PSEPF</name>
<accession>Q3K5Y5</accession>
<gene>
    <name evidence="1" type="primary">fusA</name>
    <name type="ordered locus">Pfl01_5082</name>
</gene>
<proteinExistence type="inferred from homology"/>
<evidence type="ECO:0000255" key="1">
    <source>
        <dbReference type="HAMAP-Rule" id="MF_00054"/>
    </source>
</evidence>
<feature type="chain" id="PRO_0000225230" description="Elongation factor G">
    <location>
        <begin position="1"/>
        <end position="701"/>
    </location>
</feature>
<feature type="domain" description="tr-type G">
    <location>
        <begin position="8"/>
        <end position="291"/>
    </location>
</feature>
<feature type="binding site" evidence="1">
    <location>
        <begin position="17"/>
        <end position="24"/>
    </location>
    <ligand>
        <name>GTP</name>
        <dbReference type="ChEBI" id="CHEBI:37565"/>
    </ligand>
</feature>
<feature type="binding site" evidence="1">
    <location>
        <begin position="89"/>
        <end position="93"/>
    </location>
    <ligand>
        <name>GTP</name>
        <dbReference type="ChEBI" id="CHEBI:37565"/>
    </ligand>
</feature>
<feature type="binding site" evidence="1">
    <location>
        <begin position="143"/>
        <end position="146"/>
    </location>
    <ligand>
        <name>GTP</name>
        <dbReference type="ChEBI" id="CHEBI:37565"/>
    </ligand>
</feature>
<sequence length="701" mass="77253">MARTTPISRYRNIGIVAHVDAGKTTTTERVLFYTGKSHKMGEVHDGAATTDWMVQEQERGITITSAAITAFWKGSEKQYPHEHRFNVIDTPGHVDFTIEVERSLRVLDGAVVVFCGTSGVEPQSETVWRQANKYGVPRLVYVNKMDRAGANFLRVIGQIKQRLGHTPVPIQLAIGSEDNFQGQIDLINMQAVYWNDSDKGMVPVRKEIPADMLELAEEWRNNMVEAAAEASEELMNKYLEGEELSIAEIKAALRQRTIAGEIVLAVCGSSFKNKGVPLVLDAVIDFLPAPTDIPAIKGSNPDNEEEEMERHASDDEPFAALAFKIATDPFVGTLTFVRVYSGVLNSGDGVINSVKGKKERVGRMVQMHANAREEIKEVRAGDIAALIGMKDVTTGETLCNADKPIILVRMDFPEPVISVAVEPKTKDDQEKMGIALGKLAQEDPSFRVKTDEETGQTIISGMGELHLDILVDRMRREFNVEANIGKPQVSYRERITKNCEIEGKFVRQSGGRGQFGHCWIRFAPADEGQEGLQFLNEVVGGVVPKEYIPAIQKGIEEQMKNGVVAGYPLIGLKATVFDGSYHDVDSNEMAFKVAASMATKQLAQKGGGELLEPIMAVEVVTPEDYMGDVMGDLNRRRGMIQGMEDTVSGKVIRAEVPLGEMFGYATDVRSMSQGRASYSMEFKKYDTAPSHIVESVTKKQG</sequence>